<sequence length="178" mass="20017">MASSMISSPAVTTVNRAGAGMVAPFTGLKSMAGLPTRKTNNDITSIASNGGRVQCMQVWPPVGKKKFETLSYLPDLDDAQLAKEVEYLLRKGWIPCLEFELEHGFVYREHNRSLGYYDGRYWTMWKLPMFGCTDASQVLKELQEAKTAYPNGFIRIIGFDNVRQVQCISFIAYKPPSF</sequence>
<organism>
    <name type="scientific">Glycine max</name>
    <name type="common">Soybean</name>
    <name type="synonym">Glycine hispida</name>
    <dbReference type="NCBI Taxonomy" id="3847"/>
    <lineage>
        <taxon>Eukaryota</taxon>
        <taxon>Viridiplantae</taxon>
        <taxon>Streptophyta</taxon>
        <taxon>Embryophyta</taxon>
        <taxon>Tracheophyta</taxon>
        <taxon>Spermatophyta</taxon>
        <taxon>Magnoliopsida</taxon>
        <taxon>eudicotyledons</taxon>
        <taxon>Gunneridae</taxon>
        <taxon>Pentapetalae</taxon>
        <taxon>rosids</taxon>
        <taxon>fabids</taxon>
        <taxon>Fabales</taxon>
        <taxon>Fabaceae</taxon>
        <taxon>Papilionoideae</taxon>
        <taxon>50 kb inversion clade</taxon>
        <taxon>NPAAA clade</taxon>
        <taxon>indigoferoid/millettioid clade</taxon>
        <taxon>Phaseoleae</taxon>
        <taxon>Glycine</taxon>
        <taxon>Glycine subgen. Soja</taxon>
    </lineage>
</organism>
<name>RBS2_SOYBN</name>
<proteinExistence type="inferred from homology"/>
<dbReference type="EMBL" id="M16889">
    <property type="protein sequence ID" value="AAA34008.1"/>
    <property type="molecule type" value="Genomic_DNA"/>
</dbReference>
<dbReference type="PIR" id="A30837">
    <property type="entry name" value="RKSYS4"/>
</dbReference>
<dbReference type="SMR" id="P12468"/>
<dbReference type="FunCoup" id="P12468">
    <property type="interactions" value="2629"/>
</dbReference>
<dbReference type="STRING" id="3847.P12468"/>
<dbReference type="InParanoid" id="P12468"/>
<dbReference type="Proteomes" id="UP000008827">
    <property type="component" value="Unplaced"/>
</dbReference>
<dbReference type="GO" id="GO:0009507">
    <property type="term" value="C:chloroplast"/>
    <property type="evidence" value="ECO:0007669"/>
    <property type="project" value="UniProtKB-SubCell"/>
</dbReference>
<dbReference type="GO" id="GO:0016984">
    <property type="term" value="F:ribulose-bisphosphate carboxylase activity"/>
    <property type="evidence" value="ECO:0007669"/>
    <property type="project" value="UniProtKB-UniRule"/>
</dbReference>
<dbReference type="GO" id="GO:0009853">
    <property type="term" value="P:photorespiration"/>
    <property type="evidence" value="ECO:0007669"/>
    <property type="project" value="UniProtKB-KW"/>
</dbReference>
<dbReference type="GO" id="GO:0019253">
    <property type="term" value="P:reductive pentose-phosphate cycle"/>
    <property type="evidence" value="ECO:0007669"/>
    <property type="project" value="UniProtKB-UniRule"/>
</dbReference>
<dbReference type="CDD" id="cd03527">
    <property type="entry name" value="RuBisCO_small"/>
    <property type="match status" value="1"/>
</dbReference>
<dbReference type="FunFam" id="3.30.190.10:FF:000001">
    <property type="entry name" value="Ribulose bisphosphate carboxylase small chain, chloroplastic"/>
    <property type="match status" value="1"/>
</dbReference>
<dbReference type="Gene3D" id="3.30.190.10">
    <property type="entry name" value="Ribulose bisphosphate carboxylase, small subunit"/>
    <property type="match status" value="1"/>
</dbReference>
<dbReference type="HAMAP" id="MF_00859">
    <property type="entry name" value="RuBisCO_S_bact"/>
    <property type="match status" value="1"/>
</dbReference>
<dbReference type="InterPro" id="IPR024681">
    <property type="entry name" value="RuBisCO_ssu"/>
</dbReference>
<dbReference type="InterPro" id="IPR000894">
    <property type="entry name" value="RuBisCO_ssu_dom"/>
</dbReference>
<dbReference type="InterPro" id="IPR024680">
    <property type="entry name" value="RuBisCO_ssu_N"/>
</dbReference>
<dbReference type="InterPro" id="IPR036385">
    <property type="entry name" value="RuBisCO_ssu_sf"/>
</dbReference>
<dbReference type="PANTHER" id="PTHR31262">
    <property type="entry name" value="RIBULOSE BISPHOSPHATE CARBOXYLASE SMALL CHAIN 1, CHLOROPLASTIC"/>
    <property type="match status" value="1"/>
</dbReference>
<dbReference type="PANTHER" id="PTHR31262:SF19">
    <property type="entry name" value="RIBULOSE BISPHOSPHATE CARBOXYLASE SMALL SUBUNIT, CHLOROPLASTIC 2"/>
    <property type="match status" value="1"/>
</dbReference>
<dbReference type="Pfam" id="PF12338">
    <property type="entry name" value="RbcS"/>
    <property type="match status" value="1"/>
</dbReference>
<dbReference type="Pfam" id="PF00101">
    <property type="entry name" value="RuBisCO_small"/>
    <property type="match status" value="1"/>
</dbReference>
<dbReference type="PRINTS" id="PR00152">
    <property type="entry name" value="RUBISCOSMALL"/>
</dbReference>
<dbReference type="SMART" id="SM00961">
    <property type="entry name" value="RuBisCO_small"/>
    <property type="match status" value="1"/>
</dbReference>
<dbReference type="SUPFAM" id="SSF55239">
    <property type="entry name" value="RuBisCO, small subunit"/>
    <property type="match status" value="1"/>
</dbReference>
<reference key="1">
    <citation type="journal article" date="1986" name="Plant Mol. Biol.">
        <title>Two soybean ribulose-1,5-bisphosphate carboxylase small subunit genes share extensive homology even in distant flanking sequences.</title>
        <authorList>
            <person name="Grandbastien M.-A."/>
            <person name="Berry-Lowe S."/>
            <person name="Shirley B.W."/>
            <person name="Meagher R.B."/>
        </authorList>
        <dbReference type="AGRICOLA" id="IND87019920"/>
    </citation>
    <scope>NUCLEOTIDE SEQUENCE [GENOMIC DNA]</scope>
</reference>
<accession>P12468</accession>
<gene>
    <name evidence="1" type="primary">RBCS2</name>
    <name type="synonym">RBCS-4</name>
    <name evidence="2" type="synonym">SRS4</name>
</gene>
<comment type="function">
    <text evidence="1">RuBisCO catalyzes two reactions: the carboxylation of D-ribulose 1,5-bisphosphate, the primary event in carbon dioxide fixation, as well as the oxidative fragmentation of the pentose substrate. Both reactions occur simultaneously and in competition at the same active site. Although the small subunit is not catalytic it is essential for maximal activity.</text>
</comment>
<comment type="subunit">
    <text evidence="1">Heterohexadecamer of 8 large and 8 small subunits.</text>
</comment>
<comment type="subcellular location">
    <subcellularLocation>
        <location evidence="1">Plastid</location>
        <location evidence="1">Chloroplast</location>
    </subcellularLocation>
</comment>
<comment type="miscellaneous">
    <text evidence="1">The basic functional RuBisCO is composed of a large chain homodimer in a 'head-to-tail' conformation. In form I RuBisCO this homodimer is arranged in a barrel-like tetramer with the small subunits forming a tetrameric 'cap' on each end of the 'barrel'.</text>
</comment>
<comment type="similarity">
    <text evidence="1">Belongs to the RuBisCO small chain family.</text>
</comment>
<protein>
    <recommendedName>
        <fullName evidence="1">Ribulose bisphosphate carboxylase small subunit, chloroplastic 2</fullName>
        <shortName evidence="1">RuBisCO small subunit 2</shortName>
    </recommendedName>
    <alternativeName>
        <fullName>Ribulose bisphosphate carboxylase small chain 4, chloroplastic</fullName>
        <shortName>RuBisCO small subunit 4</shortName>
    </alternativeName>
</protein>
<feature type="transit peptide" description="Chloroplast" evidence="1">
    <location>
        <begin position="1"/>
        <end position="54"/>
    </location>
</feature>
<feature type="chain" id="PRO_0000031557" description="Ribulose bisphosphate carboxylase small subunit, chloroplastic 2" evidence="1">
    <location>
        <begin position="55"/>
        <end position="178"/>
    </location>
</feature>
<evidence type="ECO:0000255" key="1">
    <source>
        <dbReference type="HAMAP-Rule" id="MF_00860"/>
    </source>
</evidence>
<evidence type="ECO:0000303" key="2">
    <source>
    </source>
</evidence>
<keyword id="KW-0113">Calvin cycle</keyword>
<keyword id="KW-0120">Carbon dioxide fixation</keyword>
<keyword id="KW-0150">Chloroplast</keyword>
<keyword id="KW-0601">Photorespiration</keyword>
<keyword id="KW-0602">Photosynthesis</keyword>
<keyword id="KW-0934">Plastid</keyword>
<keyword id="KW-1185">Reference proteome</keyword>
<keyword id="KW-0809">Transit peptide</keyword>